<gene>
    <name evidence="1" type="primary">rbfA</name>
    <name type="ordered locus">CLK_1793</name>
</gene>
<dbReference type="EMBL" id="CP000962">
    <property type="protein sequence ID" value="ACA53782.1"/>
    <property type="molecule type" value="Genomic_DNA"/>
</dbReference>
<dbReference type="RefSeq" id="WP_012341968.1">
    <property type="nucleotide sequence ID" value="NC_010520.1"/>
</dbReference>
<dbReference type="SMR" id="B1KWK6"/>
<dbReference type="KEGG" id="cbl:CLK_1793"/>
<dbReference type="HOGENOM" id="CLU_089475_6_3_9"/>
<dbReference type="GO" id="GO:0005829">
    <property type="term" value="C:cytosol"/>
    <property type="evidence" value="ECO:0007669"/>
    <property type="project" value="TreeGrafter"/>
</dbReference>
<dbReference type="GO" id="GO:0043024">
    <property type="term" value="F:ribosomal small subunit binding"/>
    <property type="evidence" value="ECO:0007669"/>
    <property type="project" value="TreeGrafter"/>
</dbReference>
<dbReference type="GO" id="GO:0030490">
    <property type="term" value="P:maturation of SSU-rRNA"/>
    <property type="evidence" value="ECO:0007669"/>
    <property type="project" value="UniProtKB-UniRule"/>
</dbReference>
<dbReference type="Gene3D" id="3.30.300.20">
    <property type="match status" value="1"/>
</dbReference>
<dbReference type="HAMAP" id="MF_00003">
    <property type="entry name" value="RbfA"/>
    <property type="match status" value="1"/>
</dbReference>
<dbReference type="InterPro" id="IPR015946">
    <property type="entry name" value="KH_dom-like_a/b"/>
</dbReference>
<dbReference type="InterPro" id="IPR000238">
    <property type="entry name" value="RbfA"/>
</dbReference>
<dbReference type="InterPro" id="IPR023799">
    <property type="entry name" value="RbfA_dom_sf"/>
</dbReference>
<dbReference type="InterPro" id="IPR020053">
    <property type="entry name" value="Ribosome-bd_factorA_CS"/>
</dbReference>
<dbReference type="NCBIfam" id="TIGR00082">
    <property type="entry name" value="rbfA"/>
    <property type="match status" value="1"/>
</dbReference>
<dbReference type="PANTHER" id="PTHR33515">
    <property type="entry name" value="RIBOSOME-BINDING FACTOR A, CHLOROPLASTIC-RELATED"/>
    <property type="match status" value="1"/>
</dbReference>
<dbReference type="PANTHER" id="PTHR33515:SF1">
    <property type="entry name" value="RIBOSOME-BINDING FACTOR A, CHLOROPLASTIC-RELATED"/>
    <property type="match status" value="1"/>
</dbReference>
<dbReference type="Pfam" id="PF02033">
    <property type="entry name" value="RBFA"/>
    <property type="match status" value="1"/>
</dbReference>
<dbReference type="SUPFAM" id="SSF89919">
    <property type="entry name" value="Ribosome-binding factor A, RbfA"/>
    <property type="match status" value="1"/>
</dbReference>
<dbReference type="PROSITE" id="PS01319">
    <property type="entry name" value="RBFA"/>
    <property type="match status" value="1"/>
</dbReference>
<keyword id="KW-0963">Cytoplasm</keyword>
<keyword id="KW-0690">Ribosome biogenesis</keyword>
<feature type="chain" id="PRO_1000088877" description="Ribosome-binding factor A">
    <location>
        <begin position="1"/>
        <end position="120"/>
    </location>
</feature>
<sequence>MAKYRAGRINEEVKKEVSSIIHNDIKDPRLSAMVSVTDVDVTKDLKYAKVYVSIFGNEKAKEESLQALKSSVGFIRKEIGRRVKLRNTPEVIIEVDNSIERGMHIDELLHSIKENKSNDN</sequence>
<reference key="1">
    <citation type="journal article" date="2007" name="PLoS ONE">
        <title>Analysis of the neurotoxin complex genes in Clostridium botulinum A1-A4 and B1 strains: BoNT/A3, /Ba4 and /B1 clusters are located within plasmids.</title>
        <authorList>
            <person name="Smith T.J."/>
            <person name="Hill K.K."/>
            <person name="Foley B.T."/>
            <person name="Detter J.C."/>
            <person name="Munk A.C."/>
            <person name="Bruce D.C."/>
            <person name="Doggett N.A."/>
            <person name="Smith L.A."/>
            <person name="Marks J.D."/>
            <person name="Xie G."/>
            <person name="Brettin T.S."/>
        </authorList>
    </citation>
    <scope>NUCLEOTIDE SEQUENCE [LARGE SCALE GENOMIC DNA]</scope>
    <source>
        <strain>Loch Maree / Type A3</strain>
    </source>
</reference>
<accession>B1KWK6</accession>
<organism>
    <name type="scientific">Clostridium botulinum (strain Loch Maree / Type A3)</name>
    <dbReference type="NCBI Taxonomy" id="498214"/>
    <lineage>
        <taxon>Bacteria</taxon>
        <taxon>Bacillati</taxon>
        <taxon>Bacillota</taxon>
        <taxon>Clostridia</taxon>
        <taxon>Eubacteriales</taxon>
        <taxon>Clostridiaceae</taxon>
        <taxon>Clostridium</taxon>
    </lineage>
</organism>
<protein>
    <recommendedName>
        <fullName evidence="1">Ribosome-binding factor A</fullName>
    </recommendedName>
</protein>
<evidence type="ECO:0000255" key="1">
    <source>
        <dbReference type="HAMAP-Rule" id="MF_00003"/>
    </source>
</evidence>
<name>RBFA_CLOBM</name>
<comment type="function">
    <text evidence="1">One of several proteins that assist in the late maturation steps of the functional core of the 30S ribosomal subunit. Associates with free 30S ribosomal subunits (but not with 30S subunits that are part of 70S ribosomes or polysomes). Required for efficient processing of 16S rRNA. May interact with the 5'-terminal helix region of 16S rRNA.</text>
</comment>
<comment type="subunit">
    <text evidence="1">Monomer. Binds 30S ribosomal subunits, but not 50S ribosomal subunits or 70S ribosomes.</text>
</comment>
<comment type="subcellular location">
    <subcellularLocation>
        <location evidence="1">Cytoplasm</location>
    </subcellularLocation>
</comment>
<comment type="similarity">
    <text evidence="1">Belongs to the RbfA family.</text>
</comment>
<proteinExistence type="inferred from homology"/>